<comment type="function">
    <text evidence="2">Conversion of glycerol 3-phosphate to dihydroxyacetone. Uses fumarate or nitrate as electron acceptor.</text>
</comment>
<comment type="catalytic activity">
    <reaction evidence="2">
        <text>a quinone + sn-glycerol 3-phosphate = dihydroxyacetone phosphate + a quinol</text>
        <dbReference type="Rhea" id="RHEA:18977"/>
        <dbReference type="ChEBI" id="CHEBI:24646"/>
        <dbReference type="ChEBI" id="CHEBI:57597"/>
        <dbReference type="ChEBI" id="CHEBI:57642"/>
        <dbReference type="ChEBI" id="CHEBI:132124"/>
        <dbReference type="EC" id="1.1.5.3"/>
    </reaction>
</comment>
<comment type="cofactor">
    <cofactor evidence="2">
        <name>FMN</name>
        <dbReference type="ChEBI" id="CHEBI:58210"/>
    </cofactor>
</comment>
<comment type="pathway">
    <text evidence="2">Polyol metabolism; glycerol degradation via glycerol kinase pathway; glycerone phosphate from sn-glycerol 3-phosphate (anaerobic route): step 1/1.</text>
</comment>
<comment type="subunit">
    <text evidence="2">Composed of a catalytic GlpA/B dimer and of membrane bound GlpC.</text>
</comment>
<comment type="subcellular location">
    <subcellularLocation>
        <location evidence="1">Cell inner membrane</location>
        <topology evidence="1">Peripheral membrane protein</topology>
    </subcellularLocation>
    <text evidence="1">Loosely bound to the cytoplasmic membrane often occurring in vesicles associated with fumarate reductase.</text>
</comment>
<comment type="similarity">
    <text evidence="2">Belongs to the anaerobic G-3-P dehydrogenase subunit B family.</text>
</comment>
<evidence type="ECO:0000250" key="1"/>
<evidence type="ECO:0000255" key="2">
    <source>
        <dbReference type="HAMAP-Rule" id="MF_00753"/>
    </source>
</evidence>
<evidence type="ECO:0000305" key="3"/>
<dbReference type="EC" id="1.1.5.3" evidence="2"/>
<dbReference type="EMBL" id="AE005674">
    <property type="protein sequence ID" value="AAN43839.2"/>
    <property type="molecule type" value="Genomic_DNA"/>
</dbReference>
<dbReference type="EMBL" id="AE014073">
    <property type="protein sequence ID" value="AAP17657.1"/>
    <property type="molecule type" value="Genomic_DNA"/>
</dbReference>
<dbReference type="RefSeq" id="NP_708132.2">
    <property type="nucleotide sequence ID" value="NC_004337.2"/>
</dbReference>
<dbReference type="RefSeq" id="WP_001209898.1">
    <property type="nucleotide sequence ID" value="NZ_CP123365.1"/>
</dbReference>
<dbReference type="STRING" id="198214.SF2324"/>
<dbReference type="PaxDb" id="198214-SF2324"/>
<dbReference type="GeneID" id="1026758"/>
<dbReference type="KEGG" id="sfl:SF2324"/>
<dbReference type="KEGG" id="sfx:S2457"/>
<dbReference type="PATRIC" id="fig|198214.7.peg.2784"/>
<dbReference type="HOGENOM" id="CLU_047793_0_0_6"/>
<dbReference type="UniPathway" id="UPA00618">
    <property type="reaction ID" value="UER00673"/>
</dbReference>
<dbReference type="Proteomes" id="UP000001006">
    <property type="component" value="Chromosome"/>
</dbReference>
<dbReference type="Proteomes" id="UP000002673">
    <property type="component" value="Chromosome"/>
</dbReference>
<dbReference type="GO" id="GO:0009331">
    <property type="term" value="C:glycerol-3-phosphate dehydrogenase (FAD) complex"/>
    <property type="evidence" value="ECO:0007669"/>
    <property type="project" value="InterPro"/>
</dbReference>
<dbReference type="GO" id="GO:0005886">
    <property type="term" value="C:plasma membrane"/>
    <property type="evidence" value="ECO:0007669"/>
    <property type="project" value="UniProtKB-SubCell"/>
</dbReference>
<dbReference type="GO" id="GO:0004368">
    <property type="term" value="F:glycerol-3-phosphate dehydrogenase (quinone) activity"/>
    <property type="evidence" value="ECO:0007669"/>
    <property type="project" value="UniProtKB-UniRule"/>
</dbReference>
<dbReference type="GO" id="GO:0009061">
    <property type="term" value="P:anaerobic respiration"/>
    <property type="evidence" value="ECO:0007669"/>
    <property type="project" value="TreeGrafter"/>
</dbReference>
<dbReference type="GO" id="GO:0019563">
    <property type="term" value="P:glycerol catabolic process"/>
    <property type="evidence" value="ECO:0007669"/>
    <property type="project" value="UniProtKB-UniRule"/>
</dbReference>
<dbReference type="GO" id="GO:0046168">
    <property type="term" value="P:glycerol-3-phosphate catabolic process"/>
    <property type="evidence" value="ECO:0007669"/>
    <property type="project" value="TreeGrafter"/>
</dbReference>
<dbReference type="Gene3D" id="3.50.50.60">
    <property type="entry name" value="FAD/NAD(P)-binding domain"/>
    <property type="match status" value="1"/>
</dbReference>
<dbReference type="HAMAP" id="MF_00753">
    <property type="entry name" value="Glycerol3P_GlpB"/>
    <property type="match status" value="1"/>
</dbReference>
<dbReference type="InterPro" id="IPR003953">
    <property type="entry name" value="FAD-dep_OxRdtase_2_FAD-bd"/>
</dbReference>
<dbReference type="InterPro" id="IPR050315">
    <property type="entry name" value="FAD-oxidoreductase_2"/>
</dbReference>
<dbReference type="InterPro" id="IPR036188">
    <property type="entry name" value="FAD/NAD-bd_sf"/>
</dbReference>
<dbReference type="InterPro" id="IPR009158">
    <property type="entry name" value="G3P_DH_GlpB_su"/>
</dbReference>
<dbReference type="NCBIfam" id="TIGR03378">
    <property type="entry name" value="glycerol3P_GlpB"/>
    <property type="match status" value="1"/>
</dbReference>
<dbReference type="NCBIfam" id="NF003718">
    <property type="entry name" value="PRK05329.1-1"/>
    <property type="match status" value="1"/>
</dbReference>
<dbReference type="NCBIfam" id="NF003719">
    <property type="entry name" value="PRK05329.1-2"/>
    <property type="match status" value="1"/>
</dbReference>
<dbReference type="NCBIfam" id="NF003720">
    <property type="entry name" value="PRK05329.1-3"/>
    <property type="match status" value="1"/>
</dbReference>
<dbReference type="PANTHER" id="PTHR43400:SF11">
    <property type="entry name" value="ANAEROBIC GLYCEROL-3-PHOSPHATE DEHYDROGENASE SUBUNIT B"/>
    <property type="match status" value="1"/>
</dbReference>
<dbReference type="PANTHER" id="PTHR43400">
    <property type="entry name" value="FUMARATE REDUCTASE"/>
    <property type="match status" value="1"/>
</dbReference>
<dbReference type="Pfam" id="PF00890">
    <property type="entry name" value="FAD_binding_2"/>
    <property type="match status" value="1"/>
</dbReference>
<dbReference type="PIRSF" id="PIRSF000141">
    <property type="entry name" value="Anaerobic_G3P_dh"/>
    <property type="match status" value="1"/>
</dbReference>
<dbReference type="SUPFAM" id="SSF51905">
    <property type="entry name" value="FAD/NAD(P)-binding domain"/>
    <property type="match status" value="1"/>
</dbReference>
<keyword id="KW-0997">Cell inner membrane</keyword>
<keyword id="KW-1003">Cell membrane</keyword>
<keyword id="KW-0285">Flavoprotein</keyword>
<keyword id="KW-0288">FMN</keyword>
<keyword id="KW-0472">Membrane</keyword>
<keyword id="KW-0560">Oxidoreductase</keyword>
<keyword id="KW-1185">Reference proteome</keyword>
<gene>
    <name evidence="2" type="primary">glpB</name>
    <name type="ordered locus">SF2324</name>
    <name type="ordered locus">S2457</name>
</gene>
<feature type="chain" id="PRO_0000204567" description="Anaerobic glycerol-3-phosphate dehydrogenase subunit B">
    <location>
        <begin position="1"/>
        <end position="419"/>
    </location>
</feature>
<feature type="sequence conflict" description="In Ref. 2; AAP17657." evidence="3" ref="2">
    <original>T</original>
    <variation>P</variation>
    <location>
        <position position="329"/>
    </location>
</feature>
<name>GLPB_SHIFL</name>
<reference key="1">
    <citation type="journal article" date="2002" name="Nucleic Acids Res.">
        <title>Genome sequence of Shigella flexneri 2a: insights into pathogenicity through comparison with genomes of Escherichia coli K12 and O157.</title>
        <authorList>
            <person name="Jin Q."/>
            <person name="Yuan Z."/>
            <person name="Xu J."/>
            <person name="Wang Y."/>
            <person name="Shen Y."/>
            <person name="Lu W."/>
            <person name="Wang J."/>
            <person name="Liu H."/>
            <person name="Yang J."/>
            <person name="Yang F."/>
            <person name="Zhang X."/>
            <person name="Zhang J."/>
            <person name="Yang G."/>
            <person name="Wu H."/>
            <person name="Qu D."/>
            <person name="Dong J."/>
            <person name="Sun L."/>
            <person name="Xue Y."/>
            <person name="Zhao A."/>
            <person name="Gao Y."/>
            <person name="Zhu J."/>
            <person name="Kan B."/>
            <person name="Ding K."/>
            <person name="Chen S."/>
            <person name="Cheng H."/>
            <person name="Yao Z."/>
            <person name="He B."/>
            <person name="Chen R."/>
            <person name="Ma D."/>
            <person name="Qiang B."/>
            <person name="Wen Y."/>
            <person name="Hou Y."/>
            <person name="Yu J."/>
        </authorList>
    </citation>
    <scope>NUCLEOTIDE SEQUENCE [LARGE SCALE GENOMIC DNA]</scope>
    <source>
        <strain>301 / Serotype 2a</strain>
    </source>
</reference>
<reference key="2">
    <citation type="journal article" date="2003" name="Infect. Immun.">
        <title>Complete genome sequence and comparative genomics of Shigella flexneri serotype 2a strain 2457T.</title>
        <authorList>
            <person name="Wei J."/>
            <person name="Goldberg M.B."/>
            <person name="Burland V."/>
            <person name="Venkatesan M.M."/>
            <person name="Deng W."/>
            <person name="Fournier G."/>
            <person name="Mayhew G.F."/>
            <person name="Plunkett G. III"/>
            <person name="Rose D.J."/>
            <person name="Darling A."/>
            <person name="Mau B."/>
            <person name="Perna N.T."/>
            <person name="Payne S.M."/>
            <person name="Runyen-Janecky L.J."/>
            <person name="Zhou S."/>
            <person name="Schwartz D.C."/>
            <person name="Blattner F.R."/>
        </authorList>
    </citation>
    <scope>NUCLEOTIDE SEQUENCE [LARGE SCALE GENOMIC DNA]</scope>
    <source>
        <strain>ATCC 700930 / 2457T / Serotype 2a</strain>
    </source>
</reference>
<accession>Q83ML0</accession>
<accession>Q7UC70</accession>
<proteinExistence type="inferred from homology"/>
<protein>
    <recommendedName>
        <fullName evidence="2">Anaerobic glycerol-3-phosphate dehydrogenase subunit B</fullName>
        <shortName evidence="2">Anaerobic G-3-P dehydrogenase subunit B</shortName>
        <shortName evidence="2">Anaerobic G3Pdhase B</shortName>
        <ecNumber evidence="2">1.1.5.3</ecNumber>
    </recommendedName>
</protein>
<organism>
    <name type="scientific">Shigella flexneri</name>
    <dbReference type="NCBI Taxonomy" id="623"/>
    <lineage>
        <taxon>Bacteria</taxon>
        <taxon>Pseudomonadati</taxon>
        <taxon>Pseudomonadota</taxon>
        <taxon>Gammaproteobacteria</taxon>
        <taxon>Enterobacterales</taxon>
        <taxon>Enterobacteriaceae</taxon>
        <taxon>Shigella</taxon>
    </lineage>
</organism>
<sequence length="419" mass="45331">MRFDTVIMGGGLAGLLCGLQLQKHGLRCAIVTRGQSALHFSSGSLDLLSHLPDGQPVADIHSGLESLRQQAPAHPYSLLGPQRVLDLACQAQALIAESGAQLQGSVELAHQRITPLGTLRATWLSSPEVPVWPLPAKKICVVGISGLMDFQAHLAAASLRELDLSVETAEIELPELDVLRNNATEFRAVNIARFLDNEENWPLLLDALIPVANTCEMILMPACFGLADDKLWRWLNEKLPCSLMLLPTLPPSVLGIRLQNQLQRQFVRQGGVWMPGDEVKKVTCKNGVVNEIWTRNHADIPLRPRFAVLASGSFFSGGLVAERNGIRETILGLDVLQTATRGEWYKGDFFAPQPWQQFGVTTDETLRPSQAGQTIENLFAIGSVLGGFDPIAQGCGGGVCAVSALHAAQQIAQRAGGQQ</sequence>